<accession>Q660X7</accession>
<name>COAE_BORGP</name>
<feature type="chain" id="PRO_0000243264" description="Dephospho-CoA kinase">
    <location>
        <begin position="1"/>
        <end position="205"/>
    </location>
</feature>
<feature type="domain" description="DPCK" evidence="1">
    <location>
        <begin position="7"/>
        <end position="205"/>
    </location>
</feature>
<feature type="binding site" evidence="1">
    <location>
        <begin position="15"/>
        <end position="20"/>
    </location>
    <ligand>
        <name>ATP</name>
        <dbReference type="ChEBI" id="CHEBI:30616"/>
    </ligand>
</feature>
<gene>
    <name evidence="1" type="primary">coaE</name>
    <name type="ordered locus">BG0557</name>
</gene>
<protein>
    <recommendedName>
        <fullName evidence="1">Dephospho-CoA kinase</fullName>
        <ecNumber evidence="1">2.7.1.24</ecNumber>
    </recommendedName>
    <alternativeName>
        <fullName evidence="1">Dephosphocoenzyme A kinase</fullName>
    </alternativeName>
</protein>
<dbReference type="EC" id="2.7.1.24" evidence="1"/>
<dbReference type="EMBL" id="CP000013">
    <property type="protein sequence ID" value="AAU07394.1"/>
    <property type="molecule type" value="Genomic_DNA"/>
</dbReference>
<dbReference type="RefSeq" id="WP_011193856.1">
    <property type="nucleotide sequence ID" value="NZ_CP028872.1"/>
</dbReference>
<dbReference type="SMR" id="Q660X7"/>
<dbReference type="GeneID" id="45161338"/>
<dbReference type="KEGG" id="bga:BG0557"/>
<dbReference type="eggNOG" id="COG0237">
    <property type="taxonomic scope" value="Bacteria"/>
</dbReference>
<dbReference type="HOGENOM" id="CLU_057180_2_2_12"/>
<dbReference type="OrthoDB" id="359604at2"/>
<dbReference type="UniPathway" id="UPA00241">
    <property type="reaction ID" value="UER00356"/>
</dbReference>
<dbReference type="Proteomes" id="UP000002276">
    <property type="component" value="Chromosome"/>
</dbReference>
<dbReference type="GO" id="GO:0005737">
    <property type="term" value="C:cytoplasm"/>
    <property type="evidence" value="ECO:0007669"/>
    <property type="project" value="UniProtKB-SubCell"/>
</dbReference>
<dbReference type="GO" id="GO:0005524">
    <property type="term" value="F:ATP binding"/>
    <property type="evidence" value="ECO:0007669"/>
    <property type="project" value="UniProtKB-UniRule"/>
</dbReference>
<dbReference type="GO" id="GO:0004140">
    <property type="term" value="F:dephospho-CoA kinase activity"/>
    <property type="evidence" value="ECO:0007669"/>
    <property type="project" value="UniProtKB-UniRule"/>
</dbReference>
<dbReference type="GO" id="GO:0015937">
    <property type="term" value="P:coenzyme A biosynthetic process"/>
    <property type="evidence" value="ECO:0007669"/>
    <property type="project" value="UniProtKB-UniRule"/>
</dbReference>
<dbReference type="CDD" id="cd02022">
    <property type="entry name" value="DPCK"/>
    <property type="match status" value="1"/>
</dbReference>
<dbReference type="Gene3D" id="3.40.50.300">
    <property type="entry name" value="P-loop containing nucleotide triphosphate hydrolases"/>
    <property type="match status" value="1"/>
</dbReference>
<dbReference type="HAMAP" id="MF_00376">
    <property type="entry name" value="Dephospho_CoA_kinase"/>
    <property type="match status" value="1"/>
</dbReference>
<dbReference type="InterPro" id="IPR001977">
    <property type="entry name" value="Depp_CoAkinase"/>
</dbReference>
<dbReference type="InterPro" id="IPR027417">
    <property type="entry name" value="P-loop_NTPase"/>
</dbReference>
<dbReference type="NCBIfam" id="TIGR00152">
    <property type="entry name" value="dephospho-CoA kinase"/>
    <property type="match status" value="1"/>
</dbReference>
<dbReference type="PANTHER" id="PTHR10695:SF46">
    <property type="entry name" value="BIFUNCTIONAL COENZYME A SYNTHASE-RELATED"/>
    <property type="match status" value="1"/>
</dbReference>
<dbReference type="PANTHER" id="PTHR10695">
    <property type="entry name" value="DEPHOSPHO-COA KINASE-RELATED"/>
    <property type="match status" value="1"/>
</dbReference>
<dbReference type="Pfam" id="PF01121">
    <property type="entry name" value="CoaE"/>
    <property type="match status" value="1"/>
</dbReference>
<dbReference type="SUPFAM" id="SSF52540">
    <property type="entry name" value="P-loop containing nucleoside triphosphate hydrolases"/>
    <property type="match status" value="1"/>
</dbReference>
<dbReference type="PROSITE" id="PS51219">
    <property type="entry name" value="DPCK"/>
    <property type="match status" value="1"/>
</dbReference>
<reference key="1">
    <citation type="journal article" date="2004" name="Nucleic Acids Res.">
        <title>Comparative analysis of the Borrelia garinii genome.</title>
        <authorList>
            <person name="Gloeckner G."/>
            <person name="Lehmann R."/>
            <person name="Romualdi A."/>
            <person name="Pradella S."/>
            <person name="Schulte-Spechtel U."/>
            <person name="Schilhabel M."/>
            <person name="Wilske B."/>
            <person name="Suehnel J."/>
            <person name="Platzer M."/>
        </authorList>
    </citation>
    <scope>NUCLEOTIDE SEQUENCE [LARGE SCALE GENOMIC DNA]</scope>
    <source>
        <strain>ATCC BAA-2496 / DSM 23469 / PBi</strain>
    </source>
</reference>
<comment type="function">
    <text evidence="1">Catalyzes the phosphorylation of the 3'-hydroxyl group of dephosphocoenzyme A to form coenzyme A.</text>
</comment>
<comment type="catalytic activity">
    <reaction evidence="1">
        <text>3'-dephospho-CoA + ATP = ADP + CoA + H(+)</text>
        <dbReference type="Rhea" id="RHEA:18245"/>
        <dbReference type="ChEBI" id="CHEBI:15378"/>
        <dbReference type="ChEBI" id="CHEBI:30616"/>
        <dbReference type="ChEBI" id="CHEBI:57287"/>
        <dbReference type="ChEBI" id="CHEBI:57328"/>
        <dbReference type="ChEBI" id="CHEBI:456216"/>
        <dbReference type="EC" id="2.7.1.24"/>
    </reaction>
</comment>
<comment type="pathway">
    <text evidence="1">Cofactor biosynthesis; coenzyme A biosynthesis; CoA from (R)-pantothenate: step 5/5.</text>
</comment>
<comment type="subcellular location">
    <subcellularLocation>
        <location evidence="1">Cytoplasm</location>
    </subcellularLocation>
</comment>
<comment type="similarity">
    <text evidence="1">Belongs to the CoaE family.</text>
</comment>
<proteinExistence type="inferred from homology"/>
<sequence>MGRNPLIIGITGRIASGKDAASKIISNKYGFYEISADKLGHLVLHEKKEELVKIFGQKILNTRNEIDRLLIRNLVFNDNKELKKLESISHPIIFNKIKKILIQNQSTKIIINAALLFKINLEKLCDYIIVVKAKAPIIKNRLSYSMPSIDSNIINKILEIQKDIFFKKNIINLKIINIINNKNYAYLEKEIEKKMQEIINYERFE</sequence>
<organism>
    <name type="scientific">Borrelia garinii subsp. bavariensis (strain ATCC BAA-2496 / DSM 23469 / PBi)</name>
    <name type="common">Borreliella bavariensis</name>
    <dbReference type="NCBI Taxonomy" id="290434"/>
    <lineage>
        <taxon>Bacteria</taxon>
        <taxon>Pseudomonadati</taxon>
        <taxon>Spirochaetota</taxon>
        <taxon>Spirochaetia</taxon>
        <taxon>Spirochaetales</taxon>
        <taxon>Borreliaceae</taxon>
        <taxon>Borreliella</taxon>
    </lineage>
</organism>
<keyword id="KW-0067">ATP-binding</keyword>
<keyword id="KW-0173">Coenzyme A biosynthesis</keyword>
<keyword id="KW-0963">Cytoplasm</keyword>
<keyword id="KW-0418">Kinase</keyword>
<keyword id="KW-0547">Nucleotide-binding</keyword>
<keyword id="KW-0808">Transferase</keyword>
<evidence type="ECO:0000255" key="1">
    <source>
        <dbReference type="HAMAP-Rule" id="MF_00376"/>
    </source>
</evidence>